<comment type="similarity">
    <text evidence="1">Belongs to the UPF0301 (AlgH) family.</text>
</comment>
<evidence type="ECO:0000255" key="1">
    <source>
        <dbReference type="HAMAP-Rule" id="MF_00758"/>
    </source>
</evidence>
<proteinExistence type="inferred from homology"/>
<dbReference type="EMBL" id="CP000378">
    <property type="protein sequence ID" value="ABF75294.1"/>
    <property type="molecule type" value="Genomic_DNA"/>
</dbReference>
<dbReference type="SMR" id="Q1BYL1"/>
<dbReference type="HOGENOM" id="CLU_057596_1_0_4"/>
<dbReference type="GO" id="GO:0005829">
    <property type="term" value="C:cytosol"/>
    <property type="evidence" value="ECO:0007669"/>
    <property type="project" value="TreeGrafter"/>
</dbReference>
<dbReference type="Gene3D" id="3.40.1740.10">
    <property type="entry name" value="VC0467-like"/>
    <property type="match status" value="1"/>
</dbReference>
<dbReference type="HAMAP" id="MF_00758">
    <property type="entry name" value="UPF0301"/>
    <property type="match status" value="1"/>
</dbReference>
<dbReference type="InterPro" id="IPR003774">
    <property type="entry name" value="AlgH-like"/>
</dbReference>
<dbReference type="NCBIfam" id="NF001266">
    <property type="entry name" value="PRK00228.1-1"/>
    <property type="match status" value="1"/>
</dbReference>
<dbReference type="NCBIfam" id="NF001267">
    <property type="entry name" value="PRK00228.1-2"/>
    <property type="match status" value="1"/>
</dbReference>
<dbReference type="PANTHER" id="PTHR30327">
    <property type="entry name" value="UNCHARACTERIZED PROTEIN YQGE"/>
    <property type="match status" value="1"/>
</dbReference>
<dbReference type="PANTHER" id="PTHR30327:SF1">
    <property type="entry name" value="UPF0301 PROTEIN YQGE"/>
    <property type="match status" value="1"/>
</dbReference>
<dbReference type="Pfam" id="PF02622">
    <property type="entry name" value="DUF179"/>
    <property type="match status" value="1"/>
</dbReference>
<dbReference type="SUPFAM" id="SSF143456">
    <property type="entry name" value="VC0467-like"/>
    <property type="match status" value="1"/>
</dbReference>
<accession>Q1BYL1</accession>
<reference key="1">
    <citation type="submission" date="2006-05" db="EMBL/GenBank/DDBJ databases">
        <title>Complete sequence of chromosome 1 of Burkholderia cenocepacia AU 1054.</title>
        <authorList>
            <consortium name="US DOE Joint Genome Institute"/>
            <person name="Copeland A."/>
            <person name="Lucas S."/>
            <person name="Lapidus A."/>
            <person name="Barry K."/>
            <person name="Detter J.C."/>
            <person name="Glavina del Rio T."/>
            <person name="Hammon N."/>
            <person name="Israni S."/>
            <person name="Dalin E."/>
            <person name="Tice H."/>
            <person name="Pitluck S."/>
            <person name="Chain P."/>
            <person name="Malfatti S."/>
            <person name="Shin M."/>
            <person name="Vergez L."/>
            <person name="Schmutz J."/>
            <person name="Larimer F."/>
            <person name="Land M."/>
            <person name="Hauser L."/>
            <person name="Kyrpides N."/>
            <person name="Lykidis A."/>
            <person name="LiPuma J.J."/>
            <person name="Konstantinidis K."/>
            <person name="Tiedje J.M."/>
            <person name="Richardson P."/>
        </authorList>
    </citation>
    <scope>NUCLEOTIDE SEQUENCE [LARGE SCALE GENOMIC DNA]</scope>
    <source>
        <strain>AU 1054</strain>
    </source>
</reference>
<feature type="chain" id="PRO_0000258806" description="UPF0301 protein Bcen_0382">
    <location>
        <begin position="1"/>
        <end position="192"/>
    </location>
</feature>
<organism>
    <name type="scientific">Burkholderia orbicola (strain AU 1054)</name>
    <dbReference type="NCBI Taxonomy" id="331271"/>
    <lineage>
        <taxon>Bacteria</taxon>
        <taxon>Pseudomonadati</taxon>
        <taxon>Pseudomonadota</taxon>
        <taxon>Betaproteobacteria</taxon>
        <taxon>Burkholderiales</taxon>
        <taxon>Burkholderiaceae</taxon>
        <taxon>Burkholderia</taxon>
        <taxon>Burkholderia cepacia complex</taxon>
        <taxon>Burkholderia orbicola</taxon>
    </lineage>
</organism>
<gene>
    <name type="ordered locus">Bcen_0382</name>
</gene>
<name>Y382_BURO1</name>
<protein>
    <recommendedName>
        <fullName evidence="1">UPF0301 protein Bcen_0382</fullName>
    </recommendedName>
</protein>
<sequence>MSKPSDRINLTNQFLIAMPNMADPTFSGTVVYLCDHSERGALGLVINRPTDIDLESLFNRIDLKLDIEPLLHIPVYFGGPVQTERGFVLHEPVEGASYNSSMSVDGGLEMTTSKDVLEAVATGTGPKRFLLTLGHAGWGAGQLEEEIARNGWLTVAADPRIVFDTPAEERFEAALGLLGVSSSMLSGEAGHA</sequence>